<keyword id="KW-0210">Decarboxylase</keyword>
<keyword id="KW-0456">Lyase</keyword>
<keyword id="KW-0665">Pyrimidine biosynthesis</keyword>
<feature type="chain" id="PRO_0000134548" description="Orotidine 5'-phosphate decarboxylase">
    <location>
        <begin position="1"/>
        <end position="227"/>
    </location>
</feature>
<feature type="active site" description="Proton donor" evidence="1">
    <location>
        <position position="61"/>
    </location>
</feature>
<feature type="binding site" evidence="1">
    <location>
        <position position="8"/>
    </location>
    <ligand>
        <name>substrate</name>
    </ligand>
</feature>
<feature type="binding site" evidence="1">
    <location>
        <position position="30"/>
    </location>
    <ligand>
        <name>substrate</name>
    </ligand>
</feature>
<feature type="binding site" evidence="1">
    <location>
        <begin position="59"/>
        <end position="68"/>
    </location>
    <ligand>
        <name>substrate</name>
    </ligand>
</feature>
<feature type="binding site" evidence="1">
    <location>
        <position position="118"/>
    </location>
    <ligand>
        <name>substrate</name>
    </ligand>
</feature>
<feature type="binding site" evidence="1">
    <location>
        <position position="178"/>
    </location>
    <ligand>
        <name>substrate</name>
    </ligand>
</feature>
<feature type="binding site" evidence="1">
    <location>
        <position position="187"/>
    </location>
    <ligand>
        <name>substrate</name>
    </ligand>
</feature>
<feature type="binding site" evidence="1">
    <location>
        <position position="207"/>
    </location>
    <ligand>
        <name>substrate</name>
    </ligand>
</feature>
<feature type="binding site" evidence="1">
    <location>
        <position position="208"/>
    </location>
    <ligand>
        <name>substrate</name>
    </ligand>
</feature>
<gene>
    <name evidence="1" type="primary">pyrF</name>
    <name type="ordered locus">jhp_0005</name>
</gene>
<dbReference type="EC" id="4.1.1.23" evidence="1"/>
<dbReference type="EMBL" id="AE001439">
    <property type="protein sequence ID" value="AAD05589.1"/>
    <property type="molecule type" value="Genomic_DNA"/>
</dbReference>
<dbReference type="PIR" id="G71985">
    <property type="entry name" value="G71985"/>
</dbReference>
<dbReference type="RefSeq" id="WP_001175287.1">
    <property type="nucleotide sequence ID" value="NC_000921.1"/>
</dbReference>
<dbReference type="SMR" id="Q9ZN53"/>
<dbReference type="KEGG" id="hpj:jhp_0005"/>
<dbReference type="PATRIC" id="fig|85963.30.peg.1040"/>
<dbReference type="eggNOG" id="COG0284">
    <property type="taxonomic scope" value="Bacteria"/>
</dbReference>
<dbReference type="UniPathway" id="UPA00070">
    <property type="reaction ID" value="UER00120"/>
</dbReference>
<dbReference type="Proteomes" id="UP000000804">
    <property type="component" value="Chromosome"/>
</dbReference>
<dbReference type="GO" id="GO:0005829">
    <property type="term" value="C:cytosol"/>
    <property type="evidence" value="ECO:0007669"/>
    <property type="project" value="TreeGrafter"/>
</dbReference>
<dbReference type="GO" id="GO:0004590">
    <property type="term" value="F:orotidine-5'-phosphate decarboxylase activity"/>
    <property type="evidence" value="ECO:0007669"/>
    <property type="project" value="UniProtKB-UniRule"/>
</dbReference>
<dbReference type="GO" id="GO:0006207">
    <property type="term" value="P:'de novo' pyrimidine nucleobase biosynthetic process"/>
    <property type="evidence" value="ECO:0007669"/>
    <property type="project" value="InterPro"/>
</dbReference>
<dbReference type="GO" id="GO:0044205">
    <property type="term" value="P:'de novo' UMP biosynthetic process"/>
    <property type="evidence" value="ECO:0007669"/>
    <property type="project" value="UniProtKB-UniRule"/>
</dbReference>
<dbReference type="CDD" id="cd04725">
    <property type="entry name" value="OMP_decarboxylase_like"/>
    <property type="match status" value="1"/>
</dbReference>
<dbReference type="FunFam" id="3.20.20.70:FF:000345">
    <property type="entry name" value="Orotidine 5'-phosphate decarboxylase"/>
    <property type="match status" value="1"/>
</dbReference>
<dbReference type="Gene3D" id="3.20.20.70">
    <property type="entry name" value="Aldolase class I"/>
    <property type="match status" value="1"/>
</dbReference>
<dbReference type="HAMAP" id="MF_01200_B">
    <property type="entry name" value="OMPdecase_type1_B"/>
    <property type="match status" value="1"/>
</dbReference>
<dbReference type="InterPro" id="IPR013785">
    <property type="entry name" value="Aldolase_TIM"/>
</dbReference>
<dbReference type="InterPro" id="IPR014732">
    <property type="entry name" value="OMPdecase"/>
</dbReference>
<dbReference type="InterPro" id="IPR018089">
    <property type="entry name" value="OMPdecase_AS"/>
</dbReference>
<dbReference type="InterPro" id="IPR047596">
    <property type="entry name" value="OMPdecase_bac"/>
</dbReference>
<dbReference type="InterPro" id="IPR001754">
    <property type="entry name" value="OMPdeCOase_dom"/>
</dbReference>
<dbReference type="InterPro" id="IPR011060">
    <property type="entry name" value="RibuloseP-bd_barrel"/>
</dbReference>
<dbReference type="NCBIfam" id="NF001273">
    <property type="entry name" value="PRK00230.1"/>
    <property type="match status" value="1"/>
</dbReference>
<dbReference type="NCBIfam" id="TIGR01740">
    <property type="entry name" value="pyrF"/>
    <property type="match status" value="1"/>
</dbReference>
<dbReference type="PANTHER" id="PTHR32119">
    <property type="entry name" value="OROTIDINE 5'-PHOSPHATE DECARBOXYLASE"/>
    <property type="match status" value="1"/>
</dbReference>
<dbReference type="PANTHER" id="PTHR32119:SF2">
    <property type="entry name" value="OROTIDINE 5'-PHOSPHATE DECARBOXYLASE"/>
    <property type="match status" value="1"/>
</dbReference>
<dbReference type="Pfam" id="PF00215">
    <property type="entry name" value="OMPdecase"/>
    <property type="match status" value="1"/>
</dbReference>
<dbReference type="SMART" id="SM00934">
    <property type="entry name" value="OMPdecase"/>
    <property type="match status" value="1"/>
</dbReference>
<dbReference type="SUPFAM" id="SSF51366">
    <property type="entry name" value="Ribulose-phoshate binding barrel"/>
    <property type="match status" value="1"/>
</dbReference>
<dbReference type="PROSITE" id="PS00156">
    <property type="entry name" value="OMPDECASE"/>
    <property type="match status" value="1"/>
</dbReference>
<organism>
    <name type="scientific">Helicobacter pylori (strain J99 / ATCC 700824)</name>
    <name type="common">Campylobacter pylori J99</name>
    <dbReference type="NCBI Taxonomy" id="85963"/>
    <lineage>
        <taxon>Bacteria</taxon>
        <taxon>Pseudomonadati</taxon>
        <taxon>Campylobacterota</taxon>
        <taxon>Epsilonproteobacteria</taxon>
        <taxon>Campylobacterales</taxon>
        <taxon>Helicobacteraceae</taxon>
        <taxon>Helicobacter</taxon>
    </lineage>
</organism>
<protein>
    <recommendedName>
        <fullName evidence="1">Orotidine 5'-phosphate decarboxylase</fullName>
        <ecNumber evidence="1">4.1.1.23</ecNumber>
    </recommendedName>
    <alternativeName>
        <fullName evidence="1">OMP decarboxylase</fullName>
        <shortName evidence="1">OMPDCase</shortName>
        <shortName evidence="1">OMPdecase</shortName>
    </alternativeName>
</protein>
<proteinExistence type="inferred from homology"/>
<sequence length="227" mass="25253">MQLCVALDLEKKEDNLSLLQELKGLDLWAKVGLRSFIRDGATFLDEIRKIDGNFKIFLDLKLYDIPYTMANAALECAKLDIDMLTVHLSSAKSALTILMQRLNALKKRPLIMGVSALTSFSEEEFLMVYNAPLKTQAITLSAIGKESGIDGVVCSVFESLAIKEALGKGFLTLTPGIRLDKNDKEDQERVANAKEAKQNLSDFIVVGRPIYQAKEPREVVLELLKDC</sequence>
<evidence type="ECO:0000255" key="1">
    <source>
        <dbReference type="HAMAP-Rule" id="MF_01200"/>
    </source>
</evidence>
<comment type="function">
    <text evidence="1">Catalyzes the decarboxylation of orotidine 5'-monophosphate (OMP) to uridine 5'-monophosphate (UMP).</text>
</comment>
<comment type="catalytic activity">
    <reaction evidence="1">
        <text>orotidine 5'-phosphate + H(+) = UMP + CO2</text>
        <dbReference type="Rhea" id="RHEA:11596"/>
        <dbReference type="ChEBI" id="CHEBI:15378"/>
        <dbReference type="ChEBI" id="CHEBI:16526"/>
        <dbReference type="ChEBI" id="CHEBI:57538"/>
        <dbReference type="ChEBI" id="CHEBI:57865"/>
        <dbReference type="EC" id="4.1.1.23"/>
    </reaction>
</comment>
<comment type="pathway">
    <text evidence="1">Pyrimidine metabolism; UMP biosynthesis via de novo pathway; UMP from orotate: step 2/2.</text>
</comment>
<comment type="subunit">
    <text evidence="1">Homodimer.</text>
</comment>
<comment type="similarity">
    <text evidence="1">Belongs to the OMP decarboxylase family. Type 1 subfamily.</text>
</comment>
<reference key="1">
    <citation type="journal article" date="1999" name="Nature">
        <title>Genomic sequence comparison of two unrelated isolates of the human gastric pathogen Helicobacter pylori.</title>
        <authorList>
            <person name="Alm R.A."/>
            <person name="Ling L.-S.L."/>
            <person name="Moir D.T."/>
            <person name="King B.L."/>
            <person name="Brown E.D."/>
            <person name="Doig P.C."/>
            <person name="Smith D.R."/>
            <person name="Noonan B."/>
            <person name="Guild B.C."/>
            <person name="deJonge B.L."/>
            <person name="Carmel G."/>
            <person name="Tummino P.J."/>
            <person name="Caruso A."/>
            <person name="Uria-Nickelsen M."/>
            <person name="Mills D.M."/>
            <person name="Ives C."/>
            <person name="Gibson R."/>
            <person name="Merberg D."/>
            <person name="Mills S.D."/>
            <person name="Jiang Q."/>
            <person name="Taylor D.E."/>
            <person name="Vovis G.F."/>
            <person name="Trust T.J."/>
        </authorList>
    </citation>
    <scope>NUCLEOTIDE SEQUENCE [LARGE SCALE GENOMIC DNA]</scope>
    <source>
        <strain>J99 / ATCC 700824</strain>
    </source>
</reference>
<name>PYRF_HELPJ</name>
<accession>Q9ZN53</accession>